<reference key="1">
    <citation type="journal article" date="1997" name="Proc. Natl. Acad. Sci. U.S.A.">
        <title>Double muscling in cattle due to mutations in the myostatin gene.</title>
        <authorList>
            <person name="McPherron A.C."/>
            <person name="Lee S.-J."/>
        </authorList>
    </citation>
    <scope>NUCLEOTIDE SEQUENCE [MRNA]</scope>
    <source>
        <tissue>Skeletal muscle</tissue>
    </source>
</reference>
<reference key="2">
    <citation type="journal article" date="1998" name="Proc. Natl. Acad. Sci. U.S.A.">
        <title>Organization of the human myostatin gene and expression in healthy men and HIV-infected men with muscle wasting.</title>
        <authorList>
            <person name="Gonzalez-Cadavid N.F."/>
            <person name="Taylor W.E."/>
            <person name="Yarasheski K."/>
            <person name="Sinha-Hikim I."/>
            <person name="Ma K."/>
            <person name="Ezzat S."/>
            <person name="Shen R."/>
            <person name="Lalani R."/>
            <person name="Asa S."/>
            <person name="Mamita M."/>
            <person name="Nair G."/>
            <person name="Arver S."/>
            <person name="Bhasin S."/>
        </authorList>
    </citation>
    <scope>NUCLEOTIDE SEQUENCE [MRNA]</scope>
    <source>
        <tissue>Muscle</tissue>
    </source>
</reference>
<reference key="3">
    <citation type="journal article" date="2006" name="Am. J. Hum. Genet.">
        <title>Human adaptive evolution at myostatin (GDF8), a regulator of muscle growth.</title>
        <authorList>
            <person name="Saunders M.A."/>
            <person name="Good J.M."/>
            <person name="Lawrence E.C."/>
            <person name="Ferrell R.E."/>
            <person name="Li W.H."/>
            <person name="Nachman M.W."/>
        </authorList>
    </citation>
    <scope>NUCLEOTIDE SEQUENCE [GENOMIC DNA]</scope>
    <scope>VARIANTS THR-55 AND ARG-153</scope>
</reference>
<reference key="4">
    <citation type="journal article" date="2004" name="Genome Res.">
        <title>The status, quality, and expansion of the NIH full-length cDNA project: the Mammalian Gene Collection (MGC).</title>
        <authorList>
            <consortium name="The MGC Project Team"/>
        </authorList>
    </citation>
    <scope>NUCLEOTIDE SEQUENCE [LARGE SCALE MRNA]</scope>
    <source>
        <tissue>Colon</tissue>
    </source>
</reference>
<reference key="5">
    <citation type="journal article" date="2003" name="Mol. Endocrinol.">
        <title>Regulation of myostatin in vivo by growth and differentiation factor-associated serum protein-1: a novel protein with protease inhibitor and follistatin domains.</title>
        <authorList>
            <person name="Hill J.J."/>
            <person name="Qiu Y."/>
            <person name="Hewick R.M."/>
            <person name="Wolfman N.M."/>
        </authorList>
    </citation>
    <scope>INTERACTION WITH WFIKKN2</scope>
</reference>
<reference key="6">
    <citation type="journal article" date="2004" name="N. Engl. J. Med.">
        <title>Myostatin mutation associated with gross muscle hypertrophy in a child.</title>
        <authorList>
            <person name="Schuelke M."/>
            <person name="Wagner K.R."/>
            <person name="Stolz L.E."/>
            <person name="Hubner C."/>
            <person name="Riebel T."/>
            <person name="Komen W."/>
            <person name="Braun T."/>
            <person name="Tobin J.F."/>
            <person name="Lee S.J."/>
        </authorList>
    </citation>
    <scope>INVOLVEMENT IN MSLHP</scope>
</reference>
<reference key="7">
    <citation type="journal article" date="2007" name="J. Med. Invest.">
        <title>Characterization of follistatin-related gene as a negative regulatory factor for activin family members during mouse heart development.</title>
        <authorList>
            <person name="Takehara-Kasamatsu Y."/>
            <person name="Tsuchida K."/>
            <person name="Nakatani M."/>
            <person name="Murakami T."/>
            <person name="Kurisaki A."/>
            <person name="Hashimoto O."/>
            <person name="Ohuchi H."/>
            <person name="Kurose H."/>
            <person name="Mori K."/>
            <person name="Kagami S."/>
            <person name="Noji S."/>
            <person name="Sugino H."/>
        </authorList>
    </citation>
    <scope>INTERACTION WITH FSTL3</scope>
</reference>
<reference evidence="10 11" key="8">
    <citation type="journal article" date="2016" name="MAbs">
        <title>Beyond CDR-grafting: Structure-guided humanization of framework and CDR regions of an anti-myostatin antibody.</title>
        <authorList>
            <person name="Apgar J.R."/>
            <person name="Mader M."/>
            <person name="Agostinelli R."/>
            <person name="Benard S."/>
            <person name="Bialek P."/>
            <person name="Johnson M."/>
            <person name="Gao Y."/>
            <person name="Krebs M."/>
            <person name="Owens J."/>
            <person name="Parris K."/>
            <person name="St Andre M."/>
            <person name="Svenson K."/>
            <person name="Morris C."/>
            <person name="Tchistiakova L."/>
        </authorList>
    </citation>
    <scope>X-RAY CRYSTALLOGRAPHY (1.76 ANGSTROMS) OF 267-375 IN COMPLEX WITH ANTI-MSTN ANTIBODY</scope>
    <scope>DISULFIDE BONDS</scope>
    <scope>SUBUNIT</scope>
</reference>
<reference key="9">
    <citation type="journal article" date="2017" name="BMC Biol.">
        <title>Structural basis for potency differences between GDF8 and GDF11.</title>
        <authorList>
            <person name="Walker R.G."/>
            <person name="Czepnik M."/>
            <person name="Goebel E.J."/>
            <person name="McCoy J.C."/>
            <person name="Vujic A."/>
            <person name="Cho M."/>
            <person name="Oh J."/>
            <person name="Aykul S."/>
            <person name="Walton K.L."/>
            <person name="Schang G."/>
            <person name="Bernard D.J."/>
            <person name="Hinck A.P."/>
            <person name="Harrison C.A."/>
            <person name="Martinez-Hackert E."/>
            <person name="Wagers A.J."/>
            <person name="Lee R.T."/>
            <person name="Thompson T.B."/>
        </authorList>
    </citation>
    <scope>MUTAGENESIS OF ASP-267; PHE-268; GLU-312; PHE-315; VAL-316; LEU-318; HIS-328; GLY-355; GLU-357 AND ALA-366</scope>
</reference>
<name>GDF8_HUMAN</name>
<protein>
    <recommendedName>
        <fullName>Growth/differentiation factor 8</fullName>
        <shortName>GDF-8</shortName>
    </recommendedName>
    <alternativeName>
        <fullName>Myostatin</fullName>
    </alternativeName>
</protein>
<gene>
    <name type="primary">MSTN</name>
    <name type="synonym">GDF8</name>
</gene>
<accession>O14793</accession>
<accession>A1C2J7</accession>
<accession>A1C2K0</accession>
<accession>Q6B0H2</accession>
<feature type="signal peptide" evidence="2">
    <location>
        <begin position="1"/>
        <end position="23"/>
    </location>
</feature>
<feature type="propeptide" id="PRO_0000033950" evidence="2">
    <location>
        <begin position="24"/>
        <end position="266"/>
    </location>
</feature>
<feature type="chain" id="PRO_0000033951" description="Growth/differentiation factor 8">
    <location>
        <begin position="267"/>
        <end position="375"/>
    </location>
</feature>
<feature type="site" description="Cleavage" evidence="1">
    <location>
        <begin position="98"/>
        <end position="99"/>
    </location>
</feature>
<feature type="glycosylation site" description="N-linked (GlcNAc...) asparagine" evidence="2">
    <location>
        <position position="71"/>
    </location>
</feature>
<feature type="disulfide bond" evidence="7 10 11">
    <location>
        <begin position="272"/>
        <end position="282"/>
    </location>
</feature>
<feature type="disulfide bond" evidence="7 10 11">
    <location>
        <begin position="281"/>
        <end position="340"/>
    </location>
</feature>
<feature type="disulfide bond" evidence="7 10 11">
    <location>
        <begin position="309"/>
        <end position="372"/>
    </location>
</feature>
<feature type="disulfide bond" evidence="7 10 11">
    <location>
        <begin position="313"/>
        <end position="374"/>
    </location>
</feature>
<feature type="disulfide bond" description="Interchain" evidence="7 10 11">
    <location>
        <position position="339"/>
    </location>
</feature>
<feature type="sequence variant" id="VAR_014475" description="In dbSNP:rs1805085." evidence="5">
    <original>A</original>
    <variation>T</variation>
    <location>
        <position position="55"/>
    </location>
</feature>
<feature type="sequence variant" id="VAR_014476" description="In dbSNP:rs1805086." evidence="5">
    <original>K</original>
    <variation>R</variation>
    <location>
        <position position="153"/>
    </location>
</feature>
<feature type="sequence variant" id="VAR_052575" description="In dbSNP:rs34780010.">
    <original>I</original>
    <variation>T</variation>
    <location>
        <position position="348"/>
    </location>
</feature>
<feature type="sequence variant" id="VAR_052576" description="In dbSNP:rs16823988.">
    <original>R</original>
    <variation>G</variation>
    <location>
        <position position="371"/>
    </location>
</feature>
<feature type="mutagenesis site" description="Decreases SMAD3 protein signal transduction; when associated with L-268." evidence="8">
    <original>D</original>
    <variation>N</variation>
    <location>
        <position position="267"/>
    </location>
</feature>
<feature type="mutagenesis site" description="Decreases SMAD3 protein signal transduction; when associated with N-267." evidence="8">
    <original>F</original>
    <variation>L</variation>
    <location>
        <position position="268"/>
    </location>
</feature>
<feature type="mutagenesis site" description="Slightly decreased SMAD3 protein signal transduction." evidence="8">
    <original>E</original>
    <variation>Q</variation>
    <location>
        <position position="312"/>
    </location>
</feature>
<feature type="mutagenesis site" description="Increases SMAD3 protein signal transduction; when associated with M-316 and M-318." evidence="8">
    <original>F</original>
    <variation>Y</variation>
    <location>
        <position position="315"/>
    </location>
</feature>
<feature type="mutagenesis site" description="Increases SMAD3 protein signal transduction; when associated with Y-315 and M-318." evidence="8">
    <original>V</original>
    <variation>M</variation>
    <location>
        <position position="316"/>
    </location>
</feature>
<feature type="mutagenesis site" description="Increases SMAD3 protein signal transduction; when associated with Y-315 and M-316." evidence="8">
    <original>L</original>
    <variation>M</variation>
    <location>
        <position position="318"/>
    </location>
</feature>
<feature type="mutagenesis site" description="Increases SMAD3 protein signal transduction." evidence="8">
    <original>H</original>
    <variation>Q</variation>
    <location>
        <position position="328"/>
    </location>
</feature>
<feature type="mutagenesis site" description="Increases SMAD3 protein signal transduction; when associated with Q-357." evidence="8">
    <original>G</original>
    <variation>D</variation>
    <location>
        <position position="355"/>
    </location>
</feature>
<feature type="mutagenesis site" description="Increases SMAD3 protein signal transduction; when associated with D-355." evidence="8">
    <original>E</original>
    <variation>Q</variation>
    <location>
        <position position="357"/>
    </location>
</feature>
<feature type="mutagenesis site" description="Increases SMAD3 protein signal transduction." evidence="8">
    <original>A</original>
    <variation>G</variation>
    <location>
        <position position="366"/>
    </location>
</feature>
<feature type="helix" evidence="13">
    <location>
        <begin position="47"/>
        <end position="63"/>
    </location>
</feature>
<feature type="helix" evidence="13">
    <location>
        <begin position="74"/>
        <end position="80"/>
    </location>
</feature>
<feature type="helix" evidence="13">
    <location>
        <begin position="85"/>
        <end position="92"/>
    </location>
</feature>
<feature type="strand" evidence="14">
    <location>
        <begin position="110"/>
        <end position="112"/>
    </location>
</feature>
<feature type="strand" evidence="13">
    <location>
        <begin position="114"/>
        <end position="120"/>
    </location>
</feature>
<feature type="helix" evidence="13">
    <location>
        <begin position="148"/>
        <end position="150"/>
    </location>
</feature>
<feature type="strand" evidence="13">
    <location>
        <begin position="151"/>
        <end position="160"/>
    </location>
</feature>
<feature type="strand" evidence="13">
    <location>
        <begin position="167"/>
        <end position="176"/>
    </location>
</feature>
<feature type="strand" evidence="14">
    <location>
        <begin position="181"/>
        <end position="183"/>
    </location>
</feature>
<feature type="strand" evidence="13">
    <location>
        <begin position="185"/>
        <end position="196"/>
    </location>
</feature>
<feature type="strand" evidence="13">
    <location>
        <begin position="202"/>
        <end position="207"/>
    </location>
</feature>
<feature type="helix" evidence="13">
    <location>
        <begin position="209"/>
        <end position="216"/>
    </location>
</feature>
<feature type="turn" evidence="13">
    <location>
        <begin position="217"/>
        <end position="219"/>
    </location>
</feature>
<feature type="strand" evidence="13">
    <location>
        <begin position="223"/>
        <end position="230"/>
    </location>
</feature>
<feature type="strand" evidence="14">
    <location>
        <begin position="243"/>
        <end position="245"/>
    </location>
</feature>
<feature type="strand" evidence="13">
    <location>
        <begin position="252"/>
        <end position="257"/>
    </location>
</feature>
<feature type="strand" evidence="12">
    <location>
        <begin position="280"/>
        <end position="284"/>
    </location>
</feature>
<feature type="strand" evidence="12">
    <location>
        <begin position="287"/>
        <end position="289"/>
    </location>
</feature>
<feature type="helix" evidence="12">
    <location>
        <begin position="290"/>
        <end position="293"/>
    </location>
</feature>
<feature type="strand" evidence="12">
    <location>
        <begin position="298"/>
        <end position="300"/>
    </location>
</feature>
<feature type="strand" evidence="12">
    <location>
        <begin position="302"/>
        <end position="305"/>
    </location>
</feature>
<feature type="strand" evidence="12">
    <location>
        <begin position="308"/>
        <end position="310"/>
    </location>
</feature>
<feature type="helix" evidence="12">
    <location>
        <begin position="318"/>
        <end position="320"/>
    </location>
</feature>
<feature type="helix" evidence="12">
    <location>
        <begin position="321"/>
        <end position="330"/>
    </location>
</feature>
<feature type="strand" evidence="12">
    <location>
        <begin position="335"/>
        <end position="337"/>
    </location>
</feature>
<feature type="strand" evidence="12">
    <location>
        <begin position="340"/>
        <end position="353"/>
    </location>
</feature>
<feature type="strand" evidence="12">
    <location>
        <begin position="359"/>
        <end position="374"/>
    </location>
</feature>
<sequence length="375" mass="42750">MQKLQLCVYIYLFMLIVAGPVDLNENSEQKENVEKEGLCNACTWRQNTKSSRIEAIKIQILSKLRLETAPNISKDVIRQLLPKAPPLRELIDQYDVQRDDSSDGSLEDDDYHATTETIITMPTESDFLMQVDGKPKCCFFKFSSKIQYNKVVKAQLWIYLRPVETPTTVFVQILRLIKPMKDGTRYTGIRSLKLDMNPGTGIWQSIDVKTVLQNWLKQPESNLGIEIKALDENGHDLAVTFPGPGEDGLNPFLEVKVTDTPKRSRRDFGLDCDEHSTESRCCRYPLTVDFEAFGWDWIIAPKRYKANYCSGECEFVFLQKYPHTHLVHQANPRGSAGPCCTPTKMSPINMLYFNGKEQIIYGKIPAMVVDRCGCS</sequence>
<keyword id="KW-0002">3D-structure</keyword>
<keyword id="KW-0165">Cleavage on pair of basic residues</keyword>
<keyword id="KW-0202">Cytokine</keyword>
<keyword id="KW-1015">Disulfide bond</keyword>
<keyword id="KW-0325">Glycoprotein</keyword>
<keyword id="KW-0339">Growth factor</keyword>
<keyword id="KW-0358">Heparin-binding</keyword>
<keyword id="KW-1267">Proteomics identification</keyword>
<keyword id="KW-1185">Reference proteome</keyword>
<keyword id="KW-0964">Secreted</keyword>
<keyword id="KW-0732">Signal</keyword>
<proteinExistence type="evidence at protein level"/>
<evidence type="ECO:0000250" key="1">
    <source>
        <dbReference type="UniProtKB" id="O08689"/>
    </source>
</evidence>
<evidence type="ECO:0000255" key="2"/>
<evidence type="ECO:0000269" key="3">
    <source>
    </source>
</evidence>
<evidence type="ECO:0000269" key="4">
    <source>
    </source>
</evidence>
<evidence type="ECO:0000269" key="5">
    <source>
    </source>
</evidence>
<evidence type="ECO:0000269" key="6">
    <source>
    </source>
</evidence>
<evidence type="ECO:0000269" key="7">
    <source>
    </source>
</evidence>
<evidence type="ECO:0000269" key="8">
    <source>
    </source>
</evidence>
<evidence type="ECO:0000305" key="9"/>
<evidence type="ECO:0007744" key="10">
    <source>
        <dbReference type="PDB" id="5F3B"/>
    </source>
</evidence>
<evidence type="ECO:0007744" key="11">
    <source>
        <dbReference type="PDB" id="5F3H"/>
    </source>
</evidence>
<evidence type="ECO:0007829" key="12">
    <source>
        <dbReference type="PDB" id="5F3B"/>
    </source>
</evidence>
<evidence type="ECO:0007829" key="13">
    <source>
        <dbReference type="PDB" id="5NTU"/>
    </source>
</evidence>
<evidence type="ECO:0007829" key="14">
    <source>
        <dbReference type="PDB" id="6UMX"/>
    </source>
</evidence>
<dbReference type="EMBL" id="AF019627">
    <property type="protein sequence ID" value="AAB86694.1"/>
    <property type="molecule type" value="mRNA"/>
</dbReference>
<dbReference type="EMBL" id="AF104922">
    <property type="protein sequence ID" value="AAC96327.1"/>
    <property type="molecule type" value="mRNA"/>
</dbReference>
<dbReference type="EMBL" id="DQ927096">
    <property type="protein sequence ID" value="ABI48419.1"/>
    <property type="molecule type" value="Genomic_DNA"/>
</dbReference>
<dbReference type="EMBL" id="DQ927098">
    <property type="protein sequence ID" value="ABI48421.1"/>
    <property type="molecule type" value="Genomic_DNA"/>
</dbReference>
<dbReference type="EMBL" id="DQ927099">
    <property type="protein sequence ID" value="ABI48422.1"/>
    <property type="molecule type" value="Genomic_DNA"/>
</dbReference>
<dbReference type="EMBL" id="BC074757">
    <property type="protein sequence ID" value="AAH74757.2"/>
    <property type="molecule type" value="mRNA"/>
</dbReference>
<dbReference type="CCDS" id="CCDS2303.1"/>
<dbReference type="RefSeq" id="NP_005250.1">
    <property type="nucleotide sequence ID" value="NM_005259.3"/>
</dbReference>
<dbReference type="PDB" id="5F3B">
    <property type="method" value="X-ray"/>
    <property type="resolution" value="1.76 A"/>
    <property type="chains" value="C/D=267-375"/>
</dbReference>
<dbReference type="PDB" id="5F3H">
    <property type="method" value="X-ray"/>
    <property type="resolution" value="2.70 A"/>
    <property type="chains" value="I/J/K/L=268-375"/>
</dbReference>
<dbReference type="PDB" id="5NTU">
    <property type="method" value="X-ray"/>
    <property type="resolution" value="2.58 A"/>
    <property type="chains" value="A/B=43-375"/>
</dbReference>
<dbReference type="PDB" id="5NXS">
    <property type="method" value="X-ray"/>
    <property type="resolution" value="4.19 A"/>
    <property type="chains" value="A/B=43-375"/>
</dbReference>
<dbReference type="PDB" id="6UMX">
    <property type="method" value="X-ray"/>
    <property type="resolution" value="2.79 A"/>
    <property type="chains" value="A/B=24-375"/>
</dbReference>
<dbReference type="PDBsum" id="5F3B"/>
<dbReference type="PDBsum" id="5F3H"/>
<dbReference type="PDBsum" id="5NTU"/>
<dbReference type="PDBsum" id="5NXS"/>
<dbReference type="PDBsum" id="6UMX"/>
<dbReference type="SMR" id="O14793"/>
<dbReference type="BioGRID" id="108929">
    <property type="interactions" value="38"/>
</dbReference>
<dbReference type="CORUM" id="O14793"/>
<dbReference type="FunCoup" id="O14793">
    <property type="interactions" value="356"/>
</dbReference>
<dbReference type="IntAct" id="O14793">
    <property type="interactions" value="29"/>
</dbReference>
<dbReference type="MINT" id="O14793"/>
<dbReference type="STRING" id="9606.ENSP00000260950"/>
<dbReference type="BindingDB" id="O14793"/>
<dbReference type="ChEMBL" id="CHEMBL3407325"/>
<dbReference type="DrugBank" id="DB12118">
    <property type="generic name" value="Sotatercept"/>
</dbReference>
<dbReference type="DrugBank" id="DB05915">
    <property type="generic name" value="Stamulumab"/>
</dbReference>
<dbReference type="DrugCentral" id="O14793"/>
<dbReference type="GlyCosmos" id="O14793">
    <property type="glycosylation" value="1 site, No reported glycans"/>
</dbReference>
<dbReference type="GlyGen" id="O14793">
    <property type="glycosylation" value="1 site, 1 N-linked glycan (1 site)"/>
</dbReference>
<dbReference type="iPTMnet" id="O14793"/>
<dbReference type="PhosphoSitePlus" id="O14793"/>
<dbReference type="BioMuta" id="MSTN"/>
<dbReference type="MassIVE" id="O14793"/>
<dbReference type="PaxDb" id="9606-ENSP00000260950"/>
<dbReference type="PeptideAtlas" id="O14793"/>
<dbReference type="ProteomicsDB" id="48243"/>
<dbReference type="ABCD" id="O14793">
    <property type="antibodies" value="27 sequenced antibodies"/>
</dbReference>
<dbReference type="Antibodypedia" id="4098">
    <property type="antibodies" value="952 antibodies from 40 providers"/>
</dbReference>
<dbReference type="DNASU" id="2660"/>
<dbReference type="Ensembl" id="ENST00000260950.5">
    <property type="protein sequence ID" value="ENSP00000260950.3"/>
    <property type="gene ID" value="ENSG00000138379.5"/>
</dbReference>
<dbReference type="GeneID" id="2660"/>
<dbReference type="KEGG" id="hsa:2660"/>
<dbReference type="MANE-Select" id="ENST00000260950.5">
    <property type="protein sequence ID" value="ENSP00000260950.3"/>
    <property type="RefSeq nucleotide sequence ID" value="NM_005259.3"/>
    <property type="RefSeq protein sequence ID" value="NP_005250.1"/>
</dbReference>
<dbReference type="AGR" id="HGNC:4223"/>
<dbReference type="CTD" id="2660"/>
<dbReference type="DisGeNET" id="2660"/>
<dbReference type="GeneCards" id="MSTN"/>
<dbReference type="HGNC" id="HGNC:4223">
    <property type="gene designation" value="MSTN"/>
</dbReference>
<dbReference type="HPA" id="ENSG00000138379">
    <property type="expression patterns" value="Tissue enhanced (skeletal muscle, tongue)"/>
</dbReference>
<dbReference type="MalaCards" id="MSTN"/>
<dbReference type="MIM" id="601788">
    <property type="type" value="gene"/>
</dbReference>
<dbReference type="MIM" id="614160">
    <property type="type" value="phenotype"/>
</dbReference>
<dbReference type="neXtProt" id="NX_O14793"/>
<dbReference type="OpenTargets" id="ENSG00000138379"/>
<dbReference type="PharmGKB" id="PA162396253"/>
<dbReference type="VEuPathDB" id="HostDB:ENSG00000138379"/>
<dbReference type="eggNOG" id="KOG3900">
    <property type="taxonomic scope" value="Eukaryota"/>
</dbReference>
<dbReference type="GeneTree" id="ENSGT00940000160657"/>
<dbReference type="HOGENOM" id="CLU_020515_6_1_1"/>
<dbReference type="InParanoid" id="O14793"/>
<dbReference type="OMA" id="CNACMWR"/>
<dbReference type="OrthoDB" id="5948587at2759"/>
<dbReference type="PAN-GO" id="O14793">
    <property type="GO annotations" value="4 GO annotations based on evolutionary models"/>
</dbReference>
<dbReference type="PhylomeDB" id="O14793"/>
<dbReference type="TreeFam" id="TF318514"/>
<dbReference type="PathwayCommons" id="O14793"/>
<dbReference type="Reactome" id="R-HSA-9617828">
    <property type="pathway name" value="FOXO-mediated transcription of cell cycle genes"/>
</dbReference>
<dbReference type="SignaLink" id="O14793"/>
<dbReference type="SIGNOR" id="O14793"/>
<dbReference type="BioGRID-ORCS" id="2660">
    <property type="hits" value="9 hits in 1144 CRISPR screens"/>
</dbReference>
<dbReference type="GeneWiki" id="Myostatin"/>
<dbReference type="GenomeRNAi" id="2660"/>
<dbReference type="Pharos" id="O14793">
    <property type="development level" value="Tclin"/>
</dbReference>
<dbReference type="PRO" id="PR:O14793"/>
<dbReference type="Proteomes" id="UP000005640">
    <property type="component" value="Chromosome 2"/>
</dbReference>
<dbReference type="RNAct" id="O14793">
    <property type="molecule type" value="protein"/>
</dbReference>
<dbReference type="Bgee" id="ENSG00000138379">
    <property type="expression patterns" value="Expressed in male germ line stem cell (sensu Vertebrata) in testis and 94 other cell types or tissues"/>
</dbReference>
<dbReference type="ExpressionAtlas" id="O14793">
    <property type="expression patterns" value="baseline and differential"/>
</dbReference>
<dbReference type="GO" id="GO:0005615">
    <property type="term" value="C:extracellular space"/>
    <property type="evidence" value="ECO:0000314"/>
    <property type="project" value="UniProtKB"/>
</dbReference>
<dbReference type="GO" id="GO:0005125">
    <property type="term" value="F:cytokine activity"/>
    <property type="evidence" value="ECO:0000314"/>
    <property type="project" value="UniProt"/>
</dbReference>
<dbReference type="GO" id="GO:0008083">
    <property type="term" value="F:growth factor activity"/>
    <property type="evidence" value="ECO:0000304"/>
    <property type="project" value="ProtInc"/>
</dbReference>
<dbReference type="GO" id="GO:0008201">
    <property type="term" value="F:heparin binding"/>
    <property type="evidence" value="ECO:0007669"/>
    <property type="project" value="UniProtKB-KW"/>
</dbReference>
<dbReference type="GO" id="GO:0042802">
    <property type="term" value="F:identical protein binding"/>
    <property type="evidence" value="ECO:0000314"/>
    <property type="project" value="UniProtKB"/>
</dbReference>
<dbReference type="GO" id="GO:0042803">
    <property type="term" value="F:protein homodimerization activity"/>
    <property type="evidence" value="ECO:0007669"/>
    <property type="project" value="Ensembl"/>
</dbReference>
<dbReference type="GO" id="GO:0043539">
    <property type="term" value="F:protein serine/threonine kinase activator activity"/>
    <property type="evidence" value="ECO:0000314"/>
    <property type="project" value="UniProt"/>
</dbReference>
<dbReference type="GO" id="GO:0005102">
    <property type="term" value="F:signaling receptor binding"/>
    <property type="evidence" value="ECO:0000353"/>
    <property type="project" value="BHF-UCL"/>
</dbReference>
<dbReference type="GO" id="GO:0071549">
    <property type="term" value="P:cellular response to dexamethasone stimulus"/>
    <property type="evidence" value="ECO:0007669"/>
    <property type="project" value="Ensembl"/>
</dbReference>
<dbReference type="GO" id="GO:0071456">
    <property type="term" value="P:cellular response to hypoxia"/>
    <property type="evidence" value="ECO:0007669"/>
    <property type="project" value="Ensembl"/>
</dbReference>
<dbReference type="GO" id="GO:0046716">
    <property type="term" value="P:muscle cell cellular homeostasis"/>
    <property type="evidence" value="ECO:0000314"/>
    <property type="project" value="CACAO"/>
</dbReference>
<dbReference type="GO" id="GO:0007517">
    <property type="term" value="P:muscle organ development"/>
    <property type="evidence" value="ECO:0000304"/>
    <property type="project" value="ProtInc"/>
</dbReference>
<dbReference type="GO" id="GO:0014839">
    <property type="term" value="P:myoblast migration involved in skeletal muscle regeneration"/>
    <property type="evidence" value="ECO:0000250"/>
    <property type="project" value="UniProtKB"/>
</dbReference>
<dbReference type="GO" id="GO:0046627">
    <property type="term" value="P:negative regulation of insulin receptor signaling pathway"/>
    <property type="evidence" value="ECO:0007669"/>
    <property type="project" value="Ensembl"/>
</dbReference>
<dbReference type="GO" id="GO:0014741">
    <property type="term" value="P:negative regulation of muscle hypertrophy"/>
    <property type="evidence" value="ECO:0007669"/>
    <property type="project" value="Ensembl"/>
</dbReference>
<dbReference type="GO" id="GO:0045662">
    <property type="term" value="P:negative regulation of myoblast differentiation"/>
    <property type="evidence" value="ECO:0000314"/>
    <property type="project" value="CACAO"/>
</dbReference>
<dbReference type="GO" id="GO:2000818">
    <property type="term" value="P:negative regulation of myoblast proliferation"/>
    <property type="evidence" value="ECO:0000250"/>
    <property type="project" value="AgBase"/>
</dbReference>
<dbReference type="GO" id="GO:0051898">
    <property type="term" value="P:negative regulation of phosphatidylinositol 3-kinase/protein kinase B signal transduction"/>
    <property type="evidence" value="ECO:0000314"/>
    <property type="project" value="CACAO"/>
</dbReference>
<dbReference type="GO" id="GO:1902725">
    <property type="term" value="P:negative regulation of satellite cell differentiation"/>
    <property type="evidence" value="ECO:0000250"/>
    <property type="project" value="AgBase"/>
</dbReference>
<dbReference type="GO" id="GO:1902723">
    <property type="term" value="P:negative regulation of skeletal muscle satellite cell proliferation"/>
    <property type="evidence" value="ECO:0000250"/>
    <property type="project" value="AgBase"/>
</dbReference>
<dbReference type="GO" id="GO:0048632">
    <property type="term" value="P:negative regulation of skeletal muscle tissue growth"/>
    <property type="evidence" value="ECO:0000315"/>
    <property type="project" value="CACAO"/>
</dbReference>
<dbReference type="GO" id="GO:0022602">
    <property type="term" value="P:ovulation cycle process"/>
    <property type="evidence" value="ECO:0007669"/>
    <property type="project" value="Ensembl"/>
</dbReference>
<dbReference type="GO" id="GO:0045893">
    <property type="term" value="P:positive regulation of DNA-templated transcription"/>
    <property type="evidence" value="ECO:0000314"/>
    <property type="project" value="HGNC-UCL"/>
</dbReference>
<dbReference type="GO" id="GO:0010592">
    <property type="term" value="P:positive regulation of lamellipodium assembly"/>
    <property type="evidence" value="ECO:0000250"/>
    <property type="project" value="UniProtKB"/>
</dbReference>
<dbReference type="GO" id="GO:0010759">
    <property type="term" value="P:positive regulation of macrophage chemotaxis"/>
    <property type="evidence" value="ECO:0000250"/>
    <property type="project" value="UniProtKB"/>
</dbReference>
<dbReference type="GO" id="GO:0051602">
    <property type="term" value="P:response to electrical stimulus"/>
    <property type="evidence" value="ECO:0007669"/>
    <property type="project" value="Ensembl"/>
</dbReference>
<dbReference type="GO" id="GO:0043627">
    <property type="term" value="P:response to estrogen"/>
    <property type="evidence" value="ECO:0007669"/>
    <property type="project" value="Ensembl"/>
</dbReference>
<dbReference type="GO" id="GO:0045471">
    <property type="term" value="P:response to ethanol"/>
    <property type="evidence" value="ECO:0007669"/>
    <property type="project" value="Ensembl"/>
</dbReference>
<dbReference type="GO" id="GO:0009629">
    <property type="term" value="P:response to gravity"/>
    <property type="evidence" value="ECO:0007669"/>
    <property type="project" value="Ensembl"/>
</dbReference>
<dbReference type="GO" id="GO:0014850">
    <property type="term" value="P:response to muscle activity"/>
    <property type="evidence" value="ECO:0007669"/>
    <property type="project" value="Ensembl"/>
</dbReference>
<dbReference type="GO" id="GO:0033574">
    <property type="term" value="P:response to testosterone"/>
    <property type="evidence" value="ECO:0007669"/>
    <property type="project" value="Ensembl"/>
</dbReference>
<dbReference type="GO" id="GO:0014732">
    <property type="term" value="P:skeletal muscle atrophy"/>
    <property type="evidence" value="ECO:0007669"/>
    <property type="project" value="Ensembl"/>
</dbReference>
<dbReference type="GO" id="GO:0014816">
    <property type="term" value="P:skeletal muscle satellite cell differentiation"/>
    <property type="evidence" value="ECO:0007669"/>
    <property type="project" value="Ensembl"/>
</dbReference>
<dbReference type="GO" id="GO:0007179">
    <property type="term" value="P:transforming growth factor beta receptor signaling pathway"/>
    <property type="evidence" value="ECO:0007669"/>
    <property type="project" value="Ensembl"/>
</dbReference>
<dbReference type="GO" id="GO:0061450">
    <property type="term" value="P:trophoblast cell migration"/>
    <property type="evidence" value="ECO:0000305"/>
    <property type="project" value="UniProt"/>
</dbReference>
<dbReference type="CDD" id="cd19388">
    <property type="entry name" value="TGF_beta_GDF8"/>
    <property type="match status" value="1"/>
</dbReference>
<dbReference type="FunFam" id="2.60.120.970:FF:000001">
    <property type="entry name" value="Growth/differentiation factor 8"/>
    <property type="match status" value="1"/>
</dbReference>
<dbReference type="FunFam" id="2.10.90.10:FF:000006">
    <property type="entry name" value="growth/differentiation factor 8"/>
    <property type="match status" value="1"/>
</dbReference>
<dbReference type="Gene3D" id="2.60.120.970">
    <property type="match status" value="1"/>
</dbReference>
<dbReference type="Gene3D" id="2.10.90.10">
    <property type="entry name" value="Cystine-knot cytokines"/>
    <property type="match status" value="1"/>
</dbReference>
<dbReference type="InterPro" id="IPR029034">
    <property type="entry name" value="Cystine-knot_cytokine"/>
</dbReference>
<dbReference type="InterPro" id="IPR001839">
    <property type="entry name" value="TGF-b_C"/>
</dbReference>
<dbReference type="InterPro" id="IPR001111">
    <property type="entry name" value="TGF-b_propeptide"/>
</dbReference>
<dbReference type="InterPro" id="IPR015615">
    <property type="entry name" value="TGF-beta-rel"/>
</dbReference>
<dbReference type="InterPro" id="IPR017948">
    <property type="entry name" value="TGFb_CS"/>
</dbReference>
<dbReference type="PANTHER" id="PTHR11848:SF150">
    <property type="entry name" value="GROWTH_DIFFERENTIATION FACTOR 8"/>
    <property type="match status" value="1"/>
</dbReference>
<dbReference type="PANTHER" id="PTHR11848">
    <property type="entry name" value="TGF-BETA FAMILY"/>
    <property type="match status" value="1"/>
</dbReference>
<dbReference type="Pfam" id="PF00019">
    <property type="entry name" value="TGF_beta"/>
    <property type="match status" value="1"/>
</dbReference>
<dbReference type="Pfam" id="PF00688">
    <property type="entry name" value="TGFb_propeptide"/>
    <property type="match status" value="1"/>
</dbReference>
<dbReference type="SMART" id="SM00204">
    <property type="entry name" value="TGFB"/>
    <property type="match status" value="1"/>
</dbReference>
<dbReference type="SUPFAM" id="SSF57501">
    <property type="entry name" value="Cystine-knot cytokines"/>
    <property type="match status" value="1"/>
</dbReference>
<dbReference type="PROSITE" id="PS00250">
    <property type="entry name" value="TGF_BETA_1"/>
    <property type="match status" value="1"/>
</dbReference>
<dbReference type="PROSITE" id="PS51362">
    <property type="entry name" value="TGF_BETA_2"/>
    <property type="match status" value="1"/>
</dbReference>
<organism>
    <name type="scientific">Homo sapiens</name>
    <name type="common">Human</name>
    <dbReference type="NCBI Taxonomy" id="9606"/>
    <lineage>
        <taxon>Eukaryota</taxon>
        <taxon>Metazoa</taxon>
        <taxon>Chordata</taxon>
        <taxon>Craniata</taxon>
        <taxon>Vertebrata</taxon>
        <taxon>Euteleostomi</taxon>
        <taxon>Mammalia</taxon>
        <taxon>Eutheria</taxon>
        <taxon>Euarchontoglires</taxon>
        <taxon>Primates</taxon>
        <taxon>Haplorrhini</taxon>
        <taxon>Catarrhini</taxon>
        <taxon>Hominidae</taxon>
        <taxon>Homo</taxon>
    </lineage>
</organism>
<comment type="function">
    <text evidence="1">Acts specifically as a negative regulator of skeletal muscle growth.</text>
</comment>
<comment type="subunit">
    <text evidence="3 6 7">Homodimer; disulfide-linked (PubMed:27625211). Interacts with WFIKKN2, leading to inhibit its activity (PubMed:12595574). Interacts with FST3 (PubMed:17878677).</text>
</comment>
<comment type="interaction">
    <interactant intactId="EBI-8542977">
        <id>O14793</id>
    </interactant>
    <interactant intactId="EBI-1383577">
        <id>Q13705</id>
        <label>ACVR2B</label>
    </interactant>
    <organismsDiffer>false</organismsDiffer>
    <experiments>4</experiments>
</comment>
<comment type="interaction">
    <interactant intactId="EBI-8542977">
        <id>O14793</id>
    </interactant>
    <interactant intactId="EBI-489827">
        <id>P13497</id>
        <label>BMP1</label>
    </interactant>
    <organismsDiffer>false</organismsDiffer>
    <experiments>3</experiments>
</comment>
<comment type="interaction">
    <interactant intactId="EBI-8542977">
        <id>O14793</id>
    </interactant>
    <interactant intactId="EBI-1056807">
        <id>P09958</id>
        <label>FURIN</label>
    </interactant>
    <organismsDiffer>false</organismsDiffer>
    <experiments>2</experiments>
</comment>
<comment type="interaction">
    <interactant intactId="EBI-8542977">
        <id>O14793</id>
    </interactant>
    <interactant intactId="EBI-8542977">
        <id>O14793</id>
        <label>MSTN</label>
    </interactant>
    <organismsDiffer>false</organismsDiffer>
    <experiments>6</experiments>
</comment>
<comment type="interaction">
    <interactant intactId="EBI-8542977">
        <id>O14793</id>
    </interactant>
    <interactant intactId="EBI-2363713">
        <id>Q96NZ8</id>
        <label>WFIKKN1</label>
    </interactant>
    <organismsDiffer>false</organismsDiffer>
    <experiments>4</experiments>
</comment>
<comment type="interaction">
    <interactant intactId="EBI-20717185">
        <id>PRO_0000033950</id>
    </interactant>
    <interactant intactId="EBI-20717179">
        <id>PRO_0000033951</id>
        <label>MSTN</label>
        <dbReference type="UniProtKB" id="O14793"/>
    </interactant>
    <organismsDiffer>false</organismsDiffer>
    <experiments>3</experiments>
</comment>
<comment type="subcellular location">
    <subcellularLocation>
        <location evidence="1">Secreted</location>
    </subcellularLocation>
</comment>
<comment type="PTM">
    <text evidence="1">Synthesized as large precursor molecule that undergoes proteolytic cleavage to generate an N-terminal propeptide and a disulfide linked C-terminal dimer, which is the biologically active molecule. The circulating form consists of a latent complex of the C-terminal dimer and other proteins, including its propeptide, which maintain the C-terminal dimer in a latent, inactive state. Ligand activation requires additional cleavage of the prodomain by a tolloid-like metalloproteinase.</text>
</comment>
<comment type="disease" evidence="4">
    <disease id="DI-03210">
        <name>Muscle hypertrophy</name>
        <acronym>MSLHP</acronym>
        <description>A condition characterized by increased muscle bulk and strength. Affected individuals are exceptionally strong.</description>
        <dbReference type="MIM" id="614160"/>
    </disease>
    <text>The disease is caused by variants affecting the gene represented in this entry.</text>
</comment>
<comment type="similarity">
    <text evidence="9">Belongs to the TGF-beta family.</text>
</comment>
<comment type="online information" name="Wikipedia">
    <link uri="https://en.wikipedia.org/wiki/Myostatin"/>
    <text>Myostatin entry</text>
</comment>